<evidence type="ECO:0000269" key="1">
    <source>
    </source>
</evidence>
<evidence type="ECO:0000305" key="2"/>
<evidence type="ECO:0007829" key="3">
    <source>
        <dbReference type="PDB" id="8XCG"/>
    </source>
</evidence>
<gene>
    <name type="primary">I</name>
    <name type="ordered locus">lambdap20</name>
</gene>
<protein>
    <recommendedName>
        <fullName>Tail tip assembly protein I</fullName>
    </recommendedName>
</protein>
<sequence>MAATHTLPLASPGMARICLYGDLQRFGRRIDLRVKTGAEAIRALATQLPAFRQKLSDGWYQVRIAGRDVSTSGLTAQLHETLPDGAVIHIVPRVAGAKSGGVFQIVLGAAAIAGSFFTAGATLAAWGAAIGAGGMTGILFSLGASMVLGGVAQMLAPKARTPRIQTTDNGKQNTYFSSLDNMVAQGNVLPVLYGEMRVGSRVVSQEISTADEGDGGQVVVIGR</sequence>
<dbReference type="EMBL" id="J02459">
    <property type="protein sequence ID" value="AAA96552.1"/>
    <property type="molecule type" value="Genomic_DNA"/>
</dbReference>
<dbReference type="PIR" id="A43008">
    <property type="entry name" value="TJBPIL"/>
</dbReference>
<dbReference type="RefSeq" id="NP_040599.1">
    <property type="nucleotide sequence ID" value="NC_001416.1"/>
</dbReference>
<dbReference type="PDB" id="8IYK">
    <property type="method" value="EM"/>
    <property type="resolution" value="2.95 A"/>
    <property type="chains" value="I/P/h=1-223"/>
</dbReference>
<dbReference type="PDB" id="8IYL">
    <property type="method" value="EM"/>
    <property type="resolution" value="3.00 A"/>
    <property type="chains" value="I/N/f=1-223"/>
</dbReference>
<dbReference type="PDB" id="8K35">
    <property type="method" value="EM"/>
    <property type="resolution" value="3.44 A"/>
    <property type="chains" value="K/Q/x=1-223"/>
</dbReference>
<dbReference type="PDB" id="8XCG">
    <property type="method" value="EM"/>
    <property type="resolution" value="3.46 A"/>
    <property type="chains" value="I/P/h=1-223"/>
</dbReference>
<dbReference type="PDBsum" id="8IYK"/>
<dbReference type="PDBsum" id="8IYL"/>
<dbReference type="PDBsum" id="8K35"/>
<dbReference type="PDBsum" id="8XCG"/>
<dbReference type="EMDB" id="EMD-35824"/>
<dbReference type="EMDB" id="EMD-35825"/>
<dbReference type="EMDB" id="EMD-36844"/>
<dbReference type="EMDB" id="EMD-38242"/>
<dbReference type="SMR" id="P03730"/>
<dbReference type="GeneID" id="2703515"/>
<dbReference type="KEGG" id="vg:2703515"/>
<dbReference type="Proteomes" id="UP000001711">
    <property type="component" value="Genome"/>
</dbReference>
<dbReference type="GO" id="GO:0030430">
    <property type="term" value="C:host cell cytoplasm"/>
    <property type="evidence" value="ECO:0007669"/>
    <property type="project" value="UniProtKB-SubCell"/>
</dbReference>
<dbReference type="GO" id="GO:0098003">
    <property type="term" value="P:viral tail assembly"/>
    <property type="evidence" value="ECO:0007669"/>
    <property type="project" value="UniProtKB-KW"/>
</dbReference>
<dbReference type="Gene3D" id="3.10.20.30">
    <property type="match status" value="1"/>
</dbReference>
<dbReference type="InterPro" id="IPR012675">
    <property type="entry name" value="Beta-grasp_dom_sf"/>
</dbReference>
<dbReference type="InterPro" id="IPR010654">
    <property type="entry name" value="Phage_lambda_tail_I"/>
</dbReference>
<dbReference type="Pfam" id="PF06805">
    <property type="entry name" value="Lambda_tail_I"/>
    <property type="match status" value="1"/>
</dbReference>
<organismHost>
    <name type="scientific">Escherichia coli</name>
    <dbReference type="NCBI Taxonomy" id="562"/>
</organismHost>
<comment type="function">
    <text evidence="1">Plays a role in distal tail tip complex assembly. The tail tip complex is assembled successively with three tail tip proteins J, one tail tip protein I, one tail tip protein L and one tail tip protein K. The tail tip complex interacts with tail measure protein to initiate tail tube assembly. The formation of the tail tip complex is completed by the addition of tail tip protein M, which is followed by tail tube polymerization. May be excluded form tail tip during maturation and would be absent from virions.</text>
</comment>
<comment type="subcellular location">
    <subcellularLocation>
        <location>Host cytoplasm</location>
    </subcellularLocation>
</comment>
<comment type="similarity">
    <text evidence="2">Belongs to the lambda-like tail tip protein I family.</text>
</comment>
<comment type="caution">
    <text evidence="2">It is uncertain whether Met-1, Met-14 or Val-34 is the initiator.</text>
</comment>
<feature type="chain" id="PRO_0000077709" description="Tail tip assembly protein I">
    <location>
        <begin position="1"/>
        <end position="223"/>
    </location>
</feature>
<feature type="strand" evidence="3">
    <location>
        <begin position="191"/>
        <end position="195"/>
    </location>
</feature>
<feature type="strand" evidence="3">
    <location>
        <begin position="202"/>
        <end position="207"/>
    </location>
</feature>
<feature type="strand" evidence="3">
    <location>
        <begin position="215"/>
        <end position="221"/>
    </location>
</feature>
<proteinExistence type="evidence at protein level"/>
<reference key="1">
    <citation type="journal article" date="1982" name="J. Mol. Biol.">
        <title>Nucleotide sequence of bacteriophage lambda DNA.</title>
        <authorList>
            <person name="Sanger F."/>
            <person name="Coulson A.R."/>
            <person name="Hong G.F."/>
            <person name="Hill D.F."/>
            <person name="Petersen G.B."/>
        </authorList>
    </citation>
    <scope>NUCLEOTIDE SEQUENCE [LARGE SCALE GENOMIC DNA]</scope>
</reference>
<reference key="2">
    <citation type="journal article" date="1976" name="J. Mol. Biol.">
        <title>Morphogenesis of bacteriophage lambda tail. Polymorphism in the assembly of the major tail protein.</title>
        <authorList>
            <person name="Katsura I."/>
        </authorList>
    </citation>
    <scope>FUNCTION</scope>
</reference>
<accession>P03730</accession>
<name>TIPI_LAMBD</name>
<organism>
    <name type="scientific">Escherichia phage lambda</name>
    <name type="common">Bacteriophage lambda</name>
    <dbReference type="NCBI Taxonomy" id="2681611"/>
    <lineage>
        <taxon>Viruses</taxon>
        <taxon>Duplodnaviria</taxon>
        <taxon>Heunggongvirae</taxon>
        <taxon>Uroviricota</taxon>
        <taxon>Caudoviricetes</taxon>
        <taxon>Lambdavirus</taxon>
        <taxon>Lambdavirus lambda</taxon>
    </lineage>
</organism>
<keyword id="KW-0002">3D-structure</keyword>
<keyword id="KW-1035">Host cytoplasm</keyword>
<keyword id="KW-0426">Late protein</keyword>
<keyword id="KW-1185">Reference proteome</keyword>
<keyword id="KW-1188">Viral release from host cell</keyword>
<keyword id="KW-1245">Viral tail assembly</keyword>